<organism>
    <name type="scientific">Pongo abelii</name>
    <name type="common">Sumatran orangutan</name>
    <name type="synonym">Pongo pygmaeus abelii</name>
    <dbReference type="NCBI Taxonomy" id="9601"/>
    <lineage>
        <taxon>Eukaryota</taxon>
        <taxon>Metazoa</taxon>
        <taxon>Chordata</taxon>
        <taxon>Craniata</taxon>
        <taxon>Vertebrata</taxon>
        <taxon>Euteleostomi</taxon>
        <taxon>Mammalia</taxon>
        <taxon>Eutheria</taxon>
        <taxon>Euarchontoglires</taxon>
        <taxon>Primates</taxon>
        <taxon>Haplorrhini</taxon>
        <taxon>Catarrhini</taxon>
        <taxon>Hominidae</taxon>
        <taxon>Pongo</taxon>
    </lineage>
</organism>
<keyword id="KW-0130">Cell adhesion</keyword>
<keyword id="KW-0965">Cell junction</keyword>
<keyword id="KW-1003">Cell membrane</keyword>
<keyword id="KW-0966">Cell projection</keyword>
<keyword id="KW-0217">Developmental protein</keyword>
<keyword id="KW-1015">Disulfide bond</keyword>
<keyword id="KW-0256">Endoplasmic reticulum</keyword>
<keyword id="KW-0325">Glycoprotein</keyword>
<keyword id="KW-0433">Leucine-rich repeat</keyword>
<keyword id="KW-0472">Membrane</keyword>
<keyword id="KW-1185">Reference proteome</keyword>
<keyword id="KW-0677">Repeat</keyword>
<keyword id="KW-0964">Secreted</keyword>
<keyword id="KW-0732">Signal</keyword>
<keyword id="KW-0770">Synapse</keyword>
<keyword id="KW-0812">Transmembrane</keyword>
<keyword id="KW-1133">Transmembrane helix</keyword>
<gene>
    <name type="primary">FLRT3</name>
</gene>
<name>FLRT3_PONAB</name>
<feature type="signal peptide" evidence="4">
    <location>
        <begin position="1"/>
        <end position="28"/>
    </location>
</feature>
<feature type="chain" id="PRO_0000352674" description="Leucine-rich repeat transmembrane protein FLRT3">
    <location>
        <begin position="29"/>
        <end position="649"/>
    </location>
</feature>
<feature type="topological domain" description="Extracellular" evidence="4">
    <location>
        <begin position="29"/>
        <end position="528"/>
    </location>
</feature>
<feature type="transmembrane region" description="Helical" evidence="4">
    <location>
        <begin position="529"/>
        <end position="549"/>
    </location>
</feature>
<feature type="topological domain" description="Cytoplasmic" evidence="4">
    <location>
        <begin position="550"/>
        <end position="649"/>
    </location>
</feature>
<feature type="domain" description="LRRNT" evidence="4">
    <location>
        <begin position="29"/>
        <end position="58"/>
    </location>
</feature>
<feature type="repeat" description="LRR 1" evidence="4">
    <location>
        <begin position="59"/>
        <end position="80"/>
    </location>
</feature>
<feature type="repeat" description="LRR 2" evidence="4">
    <location>
        <begin position="84"/>
        <end position="104"/>
    </location>
</feature>
<feature type="repeat" description="LRR 3" evidence="4">
    <location>
        <begin position="105"/>
        <end position="126"/>
    </location>
</feature>
<feature type="repeat" description="LRR 4" evidence="4">
    <location>
        <begin position="129"/>
        <end position="150"/>
    </location>
</feature>
<feature type="repeat" description="LRR 5" evidence="4">
    <location>
        <begin position="155"/>
        <end position="176"/>
    </location>
</feature>
<feature type="repeat" description="LRR 6" evidence="4">
    <location>
        <begin position="177"/>
        <end position="197"/>
    </location>
</feature>
<feature type="repeat" description="LRR 7" evidence="4">
    <location>
        <begin position="200"/>
        <end position="220"/>
    </location>
</feature>
<feature type="repeat" description="LRR 8" evidence="4">
    <location>
        <begin position="226"/>
        <end position="247"/>
    </location>
</feature>
<feature type="repeat" description="LRR 9" evidence="4">
    <location>
        <begin position="248"/>
        <end position="269"/>
    </location>
</feature>
<feature type="repeat" description="LRR 10" evidence="4">
    <location>
        <begin position="272"/>
        <end position="293"/>
    </location>
</feature>
<feature type="domain" description="LRRCT" evidence="4">
    <location>
        <begin position="305"/>
        <end position="357"/>
    </location>
</feature>
<feature type="domain" description="Fibronectin type-III" evidence="5">
    <location>
        <begin position="409"/>
        <end position="504"/>
    </location>
</feature>
<feature type="region of interest" description="Interaction with ADGRL3" evidence="3">
    <location>
        <begin position="38"/>
        <end position="67"/>
    </location>
</feature>
<feature type="region of interest" description="Disordered" evidence="6">
    <location>
        <begin position="385"/>
        <end position="407"/>
    </location>
</feature>
<feature type="region of interest" description="Disordered" evidence="6">
    <location>
        <begin position="622"/>
        <end position="649"/>
    </location>
</feature>
<feature type="compositionally biased region" description="Basic and acidic residues" evidence="6">
    <location>
        <begin position="389"/>
        <end position="401"/>
    </location>
</feature>
<feature type="glycosylation site" description="N-linked (GlcNAc...) asparagine" evidence="4">
    <location>
        <position position="226"/>
    </location>
</feature>
<feature type="glycosylation site" description="N-linked (GlcNAc...) asparagine" evidence="4">
    <location>
        <position position="282"/>
    </location>
</feature>
<feature type="glycosylation site" description="N-linked (GlcNAc...) asparagine" evidence="4">
    <location>
        <position position="296"/>
    </location>
</feature>
<feature type="disulfide bond" evidence="2">
    <location>
        <begin position="31"/>
        <end position="37"/>
    </location>
</feature>
<feature type="disulfide bond" evidence="2">
    <location>
        <begin position="35"/>
        <end position="44"/>
    </location>
</feature>
<feature type="disulfide bond" evidence="2">
    <location>
        <begin position="309"/>
        <end position="334"/>
    </location>
</feature>
<proteinExistence type="evidence at transcript level"/>
<protein>
    <recommendedName>
        <fullName>Leucine-rich repeat transmembrane protein FLRT3</fullName>
    </recommendedName>
    <alternativeName>
        <fullName>Fibronectin-like domain-containing leucine-rich transmembrane protein 3</fullName>
    </alternativeName>
</protein>
<sequence length="649" mass="73131">MISPAWSIFLIGTKIGLFLQVAPLSVMAKSCPSVCRCDAGFIYCNDRFLTSIPTGIPEDATTLYLQNNQINNAGIPSDLKNLLKVERIYLYHNSLDEFPTNLPKYVKELHLQENNIRTITYDSLSKIPYLEELRLDDNSVSAVSIEEGAFRDSNYLRLLFLSRNHLSTIPWGLPRTIEELRLDDNRIPTISSPSLQGLTSLKRLVLDGNLLNNHGLGDKVFFNLVNLTELSLVRNSLTAAPVNLPGTNLRKLYLQDNHINRVPPNAFSYLRQLYRLDMSNNNLSNLPQGIFDDLDNITQLILRNNPWYCGCKMKWVRDWLQSLPVKVNVRGLMCQAPEKVRGMAIKDLNAELFDCKDSGIVSTIQITTAIPNTVYPAQEQWPAPVTKQPDIKNPKLTKDHQTTGSPSRKTITITVKSVTSDTIHISWKLALPMTALRLSWLKLGHSPAFGSITETIVTGERSEYLVTALEPDSPYKVCMVPMETSNLYLFDETPVCIETETAPLRMYNPTTTLNREQEKEPYKNPNLPLAAIIGGAVALVTIALLALVCWYVHRNGSLFSRNCAYSKGRRRKDDYAEAGTKKDNSILEIRETSFQMLPISNEPISKEEFVIHTIFPPNGMNLYKNNHSESSSNRSYRDSGIPDSDHSHS</sequence>
<comment type="function">
    <text evidence="1 2 3">Functions in cell-cell adhesion, cell migration and axon guidance, exerting an attractive or repulsive role depending on its interaction partners. Plays a role in the spatial organization of brain neurons. Plays a role in vascular development in the retina (By similarity). Plays a role in cell-cell adhesion via its interaction with ADGRL3 and probably also other latrophilins that are expressed at the surface of adjacent cells (By similarity). Interaction with the intracellular domain of ROBO1 mediates axon attraction towards cells expressing NTN1. Mediates axon growth cone collapse and plays a repulsive role in neuron guidance via its interaction with UNC5B, and possibly also other UNC-5 family members (By similarity). Promotes neurite outgrowth (in vitro). Mediates cell-cell contacts that promote an increase both in neurite number and in neurite length. Plays a role in the regulation of the density of glutamaergic synapses. Plays a role in fibroblast growth factor-mediated signaling cascades. Required for normal morphogenesis during embryonic development, but not for normal embryonic patterning. Required for normal ventral closure, headfold fusion and definitive endoderm migration during embryonic development. Required for the formation of a normal basement membrane and the maintenance of a normal anterior visceral endoderm during embryonic development (By similarity).</text>
</comment>
<comment type="subunit">
    <text evidence="2 3">Monomer and homodimer. Self-associates (via leucine-rich repeats), giving rise to homooligomers (By similarity). Interacts with FGFR1. Interacts (via extracellular domain) with ADGRL1/LPHN1 and LPHN2 (via olfactomedin-like domain) (By similarity). Interacts (via extracellular domain) with ADGRL3 (via olfactomedin-like domain); the interaction is direct. Interacts (via extracellular domain) with UNC5B and UNC5D (via extracellular domain); the interaction is direct. Identified in complexes composed of FLRT3, ADGRL3 and UNC5B, respectively FLRT3, ADGRL3 and UNC5D (By similarity). May also interact (via extracellular domain) with UNC5A and UNC5C. Interacts (via cytoplasmic domain) with ROBO1 (By similarity).</text>
</comment>
<comment type="subcellular location">
    <subcellularLocation>
        <location evidence="2">Cell membrane</location>
        <topology evidence="2">Single-pass membrane protein</topology>
    </subcellularLocation>
    <subcellularLocation>
        <location evidence="2">Presynaptic cell membrane</location>
        <topology evidence="2">Single-pass membrane protein</topology>
    </subcellularLocation>
    <subcellularLocation>
        <location evidence="2">Endoplasmic reticulum membrane</location>
    </subcellularLocation>
    <subcellularLocation>
        <location evidence="2">Cell junction</location>
        <location evidence="2">Focal adhesion</location>
    </subcellularLocation>
    <subcellularLocation>
        <location evidence="2">Secreted</location>
    </subcellularLocation>
    <subcellularLocation>
        <location evidence="2">Cell projection</location>
        <location evidence="2">Axon</location>
    </subcellularLocation>
    <subcellularLocation>
        <location evidence="2">Cell projection</location>
        <location evidence="2">Growth cone membrane</location>
    </subcellularLocation>
    <text evidence="1 2">Detected on dendritic punctae that colocalize in part with glutamaergic synapses, but not with GABAergic synapses. Proteolytic cleavage in the juxtamembrane region gives rise to a shedded ectodomain.</text>
</comment>
<comment type="PTM">
    <text evidence="2">N-glycosylated.</text>
</comment>
<comment type="PTM">
    <text evidence="2">Proteolytic cleavage in the juxtamembrane region gives rise to a soluble ectodomain. Cleavage is probably effected by a metalloprotease.</text>
</comment>
<dbReference type="EMBL" id="CR860404">
    <property type="protein sequence ID" value="CAH92530.1"/>
    <property type="molecule type" value="mRNA"/>
</dbReference>
<dbReference type="RefSeq" id="NP_001127561.1">
    <property type="nucleotide sequence ID" value="NM_001134089.2"/>
</dbReference>
<dbReference type="SMR" id="Q5R6T0"/>
<dbReference type="STRING" id="9601.ENSPPYP00000011984"/>
<dbReference type="GlyCosmos" id="Q5R6T0">
    <property type="glycosylation" value="3 sites, No reported glycans"/>
</dbReference>
<dbReference type="GeneID" id="100174639"/>
<dbReference type="KEGG" id="pon:100174639"/>
<dbReference type="CTD" id="23767"/>
<dbReference type="eggNOG" id="ENOG502QQBZ">
    <property type="taxonomic scope" value="Eukaryota"/>
</dbReference>
<dbReference type="InParanoid" id="Q5R6T0"/>
<dbReference type="OrthoDB" id="676979at2759"/>
<dbReference type="Proteomes" id="UP000001595">
    <property type="component" value="Unplaced"/>
</dbReference>
<dbReference type="GO" id="GO:0043679">
    <property type="term" value="C:axon terminus"/>
    <property type="evidence" value="ECO:0000250"/>
    <property type="project" value="UniProtKB"/>
</dbReference>
<dbReference type="GO" id="GO:0044295">
    <property type="term" value="C:axonal growth cone"/>
    <property type="evidence" value="ECO:0000250"/>
    <property type="project" value="UniProtKB"/>
</dbReference>
<dbReference type="GO" id="GO:0005789">
    <property type="term" value="C:endoplasmic reticulum membrane"/>
    <property type="evidence" value="ECO:0007669"/>
    <property type="project" value="UniProtKB-SubCell"/>
</dbReference>
<dbReference type="GO" id="GO:0005615">
    <property type="term" value="C:extracellular space"/>
    <property type="evidence" value="ECO:0007669"/>
    <property type="project" value="TreeGrafter"/>
</dbReference>
<dbReference type="GO" id="GO:0005925">
    <property type="term" value="C:focal adhesion"/>
    <property type="evidence" value="ECO:0007669"/>
    <property type="project" value="UniProtKB-SubCell"/>
</dbReference>
<dbReference type="GO" id="GO:0032584">
    <property type="term" value="C:growth cone membrane"/>
    <property type="evidence" value="ECO:0007669"/>
    <property type="project" value="UniProtKB-SubCell"/>
</dbReference>
<dbReference type="GO" id="GO:0005886">
    <property type="term" value="C:plasma membrane"/>
    <property type="evidence" value="ECO:0000250"/>
    <property type="project" value="UniProtKB"/>
</dbReference>
<dbReference type="GO" id="GO:0097060">
    <property type="term" value="C:synaptic membrane"/>
    <property type="evidence" value="ECO:0000250"/>
    <property type="project" value="UniProtKB"/>
</dbReference>
<dbReference type="GO" id="GO:0098742">
    <property type="term" value="P:cell-cell adhesion via plasma-membrane adhesion molecules"/>
    <property type="evidence" value="ECO:0000250"/>
    <property type="project" value="UniProtKB"/>
</dbReference>
<dbReference type="GO" id="GO:0048598">
    <property type="term" value="P:embryonic morphogenesis"/>
    <property type="evidence" value="ECO:0000250"/>
    <property type="project" value="UniProtKB"/>
</dbReference>
<dbReference type="GO" id="GO:0008543">
    <property type="term" value="P:fibroblast growth factor receptor signaling pathway"/>
    <property type="evidence" value="ECO:0000250"/>
    <property type="project" value="UniProtKB"/>
</dbReference>
<dbReference type="GO" id="GO:0060322">
    <property type="term" value="P:head development"/>
    <property type="evidence" value="ECO:0000250"/>
    <property type="project" value="UniProtKB"/>
</dbReference>
<dbReference type="GO" id="GO:0007507">
    <property type="term" value="P:heart development"/>
    <property type="evidence" value="ECO:0000250"/>
    <property type="project" value="UniProtKB"/>
</dbReference>
<dbReference type="GO" id="GO:0031175">
    <property type="term" value="P:neuron projection development"/>
    <property type="evidence" value="ECO:0000250"/>
    <property type="project" value="UniProtKB"/>
</dbReference>
<dbReference type="GO" id="GO:1990138">
    <property type="term" value="P:neuron projection extension"/>
    <property type="evidence" value="ECO:0000250"/>
    <property type="project" value="UniProtKB"/>
</dbReference>
<dbReference type="GO" id="GO:0003345">
    <property type="term" value="P:proepicardium cell migration involved in pericardium morphogenesis"/>
    <property type="evidence" value="ECO:0000250"/>
    <property type="project" value="UniProtKB"/>
</dbReference>
<dbReference type="GO" id="GO:0048678">
    <property type="term" value="P:response to axon injury"/>
    <property type="evidence" value="ECO:0000250"/>
    <property type="project" value="UniProtKB"/>
</dbReference>
<dbReference type="GO" id="GO:0007416">
    <property type="term" value="P:synapse assembly"/>
    <property type="evidence" value="ECO:0000250"/>
    <property type="project" value="UniProtKB"/>
</dbReference>
<dbReference type="FunFam" id="3.80.10.10:FF:000043">
    <property type="entry name" value="Leucine-rich repeat transmembrane protein FLRT3"/>
    <property type="match status" value="1"/>
</dbReference>
<dbReference type="Gene3D" id="2.60.40.10">
    <property type="entry name" value="Immunoglobulins"/>
    <property type="match status" value="1"/>
</dbReference>
<dbReference type="Gene3D" id="3.80.10.10">
    <property type="entry name" value="Ribonuclease Inhibitor"/>
    <property type="match status" value="1"/>
</dbReference>
<dbReference type="InterPro" id="IPR000483">
    <property type="entry name" value="Cys-rich_flank_reg_C"/>
</dbReference>
<dbReference type="InterPro" id="IPR003961">
    <property type="entry name" value="FN3_dom"/>
</dbReference>
<dbReference type="InterPro" id="IPR036116">
    <property type="entry name" value="FN3_sf"/>
</dbReference>
<dbReference type="InterPro" id="IPR013783">
    <property type="entry name" value="Ig-like_fold"/>
</dbReference>
<dbReference type="InterPro" id="IPR001611">
    <property type="entry name" value="Leu-rich_rpt"/>
</dbReference>
<dbReference type="InterPro" id="IPR003591">
    <property type="entry name" value="Leu-rich_rpt_typical-subtyp"/>
</dbReference>
<dbReference type="InterPro" id="IPR032675">
    <property type="entry name" value="LRR_dom_sf"/>
</dbReference>
<dbReference type="InterPro" id="IPR000372">
    <property type="entry name" value="LRRNT"/>
</dbReference>
<dbReference type="InterPro" id="IPR050333">
    <property type="entry name" value="SLRP"/>
</dbReference>
<dbReference type="PANTHER" id="PTHR45712">
    <property type="entry name" value="AGAP008170-PA"/>
    <property type="match status" value="1"/>
</dbReference>
<dbReference type="PANTHER" id="PTHR45712:SF12">
    <property type="entry name" value="LEUCINE-RICH REPEAT TRANSMEMBRANE PROTEIN FLRT3"/>
    <property type="match status" value="1"/>
</dbReference>
<dbReference type="Pfam" id="PF13855">
    <property type="entry name" value="LRR_8"/>
    <property type="match status" value="2"/>
</dbReference>
<dbReference type="SMART" id="SM00369">
    <property type="entry name" value="LRR_TYP"/>
    <property type="match status" value="7"/>
</dbReference>
<dbReference type="SMART" id="SM00082">
    <property type="entry name" value="LRRCT"/>
    <property type="match status" value="1"/>
</dbReference>
<dbReference type="SMART" id="SM00013">
    <property type="entry name" value="LRRNT"/>
    <property type="match status" value="1"/>
</dbReference>
<dbReference type="SUPFAM" id="SSF49265">
    <property type="entry name" value="Fibronectin type III"/>
    <property type="match status" value="1"/>
</dbReference>
<dbReference type="SUPFAM" id="SSF52058">
    <property type="entry name" value="L domain-like"/>
    <property type="match status" value="2"/>
</dbReference>
<dbReference type="PROSITE" id="PS50853">
    <property type="entry name" value="FN3"/>
    <property type="match status" value="1"/>
</dbReference>
<dbReference type="PROSITE" id="PS51450">
    <property type="entry name" value="LRR"/>
    <property type="match status" value="8"/>
</dbReference>
<reference key="1">
    <citation type="submission" date="2004-11" db="EMBL/GenBank/DDBJ databases">
        <authorList>
            <consortium name="The German cDNA consortium"/>
        </authorList>
    </citation>
    <scope>NUCLEOTIDE SEQUENCE [LARGE SCALE MRNA]</scope>
    <source>
        <tissue>Brain cortex</tissue>
    </source>
</reference>
<evidence type="ECO:0000250" key="1">
    <source>
        <dbReference type="UniProtKB" id="B1H234"/>
    </source>
</evidence>
<evidence type="ECO:0000250" key="2">
    <source>
        <dbReference type="UniProtKB" id="Q8BGT1"/>
    </source>
</evidence>
<evidence type="ECO:0000250" key="3">
    <source>
        <dbReference type="UniProtKB" id="Q9NZU0"/>
    </source>
</evidence>
<evidence type="ECO:0000255" key="4"/>
<evidence type="ECO:0000255" key="5">
    <source>
        <dbReference type="PROSITE-ProRule" id="PRU00316"/>
    </source>
</evidence>
<evidence type="ECO:0000256" key="6">
    <source>
        <dbReference type="SAM" id="MobiDB-lite"/>
    </source>
</evidence>
<accession>Q5R6T0</accession>